<protein>
    <recommendedName>
        <fullName evidence="1">Small ribosomal subunit protein uS15</fullName>
    </recommendedName>
    <alternativeName>
        <fullName evidence="2">30S ribosomal protein S15</fullName>
    </alternativeName>
</protein>
<comment type="function">
    <text evidence="1">One of the primary rRNA binding proteins, it binds directly to 16S rRNA where it helps nucleate assembly of the platform of the 30S subunit by binding and bridging several RNA helices of the 16S rRNA.</text>
</comment>
<comment type="function">
    <text evidence="1">Forms an intersubunit bridge (bridge B4) with the 23S rRNA of the 50S subunit in the ribosome.</text>
</comment>
<comment type="subunit">
    <text evidence="1">Part of the 30S ribosomal subunit. Forms a bridge to the 50S subunit in the 70S ribosome, contacting the 23S rRNA.</text>
</comment>
<comment type="similarity">
    <text evidence="1">Belongs to the universal ribosomal protein uS15 family.</text>
</comment>
<evidence type="ECO:0000255" key="1">
    <source>
        <dbReference type="HAMAP-Rule" id="MF_01343"/>
    </source>
</evidence>
<evidence type="ECO:0000305" key="2"/>
<accession>Q8NP49</accession>
<accession>Q6M461</accession>
<feature type="chain" id="PRO_0000115423" description="Small ribosomal subunit protein uS15">
    <location>
        <begin position="1"/>
        <end position="89"/>
    </location>
</feature>
<feature type="sequence conflict" description="In Ref. 2; CAF20317." evidence="2" ref="2">
    <original>L</original>
    <variation>V</variation>
    <location>
        <position position="31"/>
    </location>
</feature>
<name>RS15_CORGL</name>
<keyword id="KW-1185">Reference proteome</keyword>
<keyword id="KW-0687">Ribonucleoprotein</keyword>
<keyword id="KW-0689">Ribosomal protein</keyword>
<keyword id="KW-0694">RNA-binding</keyword>
<keyword id="KW-0699">rRNA-binding</keyword>
<organism>
    <name type="scientific">Corynebacterium glutamicum (strain ATCC 13032 / DSM 20300 / JCM 1318 / BCRC 11384 / CCUG 27702 / LMG 3730 / NBRC 12168 / NCIMB 10025 / NRRL B-2784 / 534)</name>
    <dbReference type="NCBI Taxonomy" id="196627"/>
    <lineage>
        <taxon>Bacteria</taxon>
        <taxon>Bacillati</taxon>
        <taxon>Actinomycetota</taxon>
        <taxon>Actinomycetes</taxon>
        <taxon>Mycobacteriales</taxon>
        <taxon>Corynebacteriaceae</taxon>
        <taxon>Corynebacterium</taxon>
    </lineage>
</organism>
<gene>
    <name evidence="1" type="primary">rpsO</name>
    <name type="ordered locus">Cgl1976</name>
    <name type="ordered locus">cg2167</name>
</gene>
<proteinExistence type="inferred from homology"/>
<sequence>MALTSEQKKSILSEFGLHETDTGSPEAQIALLTNRINNLTEHLKFHKHDHHSRRGLLLLVGRRRGLLKYLADNNVDRYRDLIARLGLRR</sequence>
<dbReference type="EMBL" id="BA000036">
    <property type="protein sequence ID" value="BAB99369.1"/>
    <property type="molecule type" value="Genomic_DNA"/>
</dbReference>
<dbReference type="EMBL" id="BX927153">
    <property type="protein sequence ID" value="CAF20317.1"/>
    <property type="molecule type" value="Genomic_DNA"/>
</dbReference>
<dbReference type="RefSeq" id="NP_601182.1">
    <property type="nucleotide sequence ID" value="NC_003450.3"/>
</dbReference>
<dbReference type="RefSeq" id="WP_003857482.1">
    <property type="nucleotide sequence ID" value="NC_003450.3"/>
</dbReference>
<dbReference type="RefSeq" id="WP_011265853.1">
    <property type="nucleotide sequence ID" value="NC_006958.1"/>
</dbReference>
<dbReference type="SMR" id="Q8NP49"/>
<dbReference type="STRING" id="196627.cg2167"/>
<dbReference type="GeneID" id="1019933"/>
<dbReference type="KEGG" id="cgb:cg2167"/>
<dbReference type="KEGG" id="cgl:Cgl1976"/>
<dbReference type="PATRIC" id="fig|196627.13.peg.1914"/>
<dbReference type="eggNOG" id="COG0184">
    <property type="taxonomic scope" value="Bacteria"/>
</dbReference>
<dbReference type="HOGENOM" id="CLU_148518_0_0_11"/>
<dbReference type="OrthoDB" id="9799262at2"/>
<dbReference type="BioCyc" id="CORYNE:G18NG-11568-MONOMER"/>
<dbReference type="Proteomes" id="UP000000582">
    <property type="component" value="Chromosome"/>
</dbReference>
<dbReference type="Proteomes" id="UP000001009">
    <property type="component" value="Chromosome"/>
</dbReference>
<dbReference type="GO" id="GO:0022627">
    <property type="term" value="C:cytosolic small ribosomal subunit"/>
    <property type="evidence" value="ECO:0007669"/>
    <property type="project" value="TreeGrafter"/>
</dbReference>
<dbReference type="GO" id="GO:0019843">
    <property type="term" value="F:rRNA binding"/>
    <property type="evidence" value="ECO:0007669"/>
    <property type="project" value="UniProtKB-UniRule"/>
</dbReference>
<dbReference type="GO" id="GO:0003735">
    <property type="term" value="F:structural constituent of ribosome"/>
    <property type="evidence" value="ECO:0007669"/>
    <property type="project" value="InterPro"/>
</dbReference>
<dbReference type="GO" id="GO:0006412">
    <property type="term" value="P:translation"/>
    <property type="evidence" value="ECO:0007669"/>
    <property type="project" value="UniProtKB-UniRule"/>
</dbReference>
<dbReference type="CDD" id="cd00353">
    <property type="entry name" value="Ribosomal_S15p_S13e"/>
    <property type="match status" value="1"/>
</dbReference>
<dbReference type="FunFam" id="1.10.287.10:FF:000002">
    <property type="entry name" value="30S ribosomal protein S15"/>
    <property type="match status" value="1"/>
</dbReference>
<dbReference type="Gene3D" id="6.10.250.3130">
    <property type="match status" value="1"/>
</dbReference>
<dbReference type="Gene3D" id="1.10.287.10">
    <property type="entry name" value="S15/NS1, RNA-binding"/>
    <property type="match status" value="1"/>
</dbReference>
<dbReference type="HAMAP" id="MF_01343_B">
    <property type="entry name" value="Ribosomal_uS15_B"/>
    <property type="match status" value="1"/>
</dbReference>
<dbReference type="InterPro" id="IPR000589">
    <property type="entry name" value="Ribosomal_uS15"/>
</dbReference>
<dbReference type="InterPro" id="IPR005290">
    <property type="entry name" value="Ribosomal_uS15_bac-type"/>
</dbReference>
<dbReference type="InterPro" id="IPR009068">
    <property type="entry name" value="uS15_NS1_RNA-bd_sf"/>
</dbReference>
<dbReference type="NCBIfam" id="TIGR00952">
    <property type="entry name" value="S15_bact"/>
    <property type="match status" value="1"/>
</dbReference>
<dbReference type="PANTHER" id="PTHR23321">
    <property type="entry name" value="RIBOSOMAL PROTEIN S15, BACTERIAL AND ORGANELLAR"/>
    <property type="match status" value="1"/>
</dbReference>
<dbReference type="PANTHER" id="PTHR23321:SF26">
    <property type="entry name" value="SMALL RIBOSOMAL SUBUNIT PROTEIN US15M"/>
    <property type="match status" value="1"/>
</dbReference>
<dbReference type="Pfam" id="PF00312">
    <property type="entry name" value="Ribosomal_S15"/>
    <property type="match status" value="1"/>
</dbReference>
<dbReference type="SMART" id="SM01387">
    <property type="entry name" value="Ribosomal_S15"/>
    <property type="match status" value="1"/>
</dbReference>
<dbReference type="SUPFAM" id="SSF47060">
    <property type="entry name" value="S15/NS1 RNA-binding domain"/>
    <property type="match status" value="1"/>
</dbReference>
<dbReference type="PROSITE" id="PS00362">
    <property type="entry name" value="RIBOSOMAL_S15"/>
    <property type="match status" value="1"/>
</dbReference>
<reference key="1">
    <citation type="journal article" date="2003" name="Appl. Microbiol. Biotechnol.">
        <title>The Corynebacterium glutamicum genome: features and impacts on biotechnological processes.</title>
        <authorList>
            <person name="Ikeda M."/>
            <person name="Nakagawa S."/>
        </authorList>
    </citation>
    <scope>NUCLEOTIDE SEQUENCE [LARGE SCALE GENOMIC DNA]</scope>
    <source>
        <strain>ATCC 13032 / DSM 20300 / JCM 1318 / BCRC 11384 / CCUG 27702 / LMG 3730 / NBRC 12168 / NCIMB 10025 / NRRL B-2784 / 534</strain>
    </source>
</reference>
<reference key="2">
    <citation type="journal article" date="2003" name="J. Biotechnol.">
        <title>The complete Corynebacterium glutamicum ATCC 13032 genome sequence and its impact on the production of L-aspartate-derived amino acids and vitamins.</title>
        <authorList>
            <person name="Kalinowski J."/>
            <person name="Bathe B."/>
            <person name="Bartels D."/>
            <person name="Bischoff N."/>
            <person name="Bott M."/>
            <person name="Burkovski A."/>
            <person name="Dusch N."/>
            <person name="Eggeling L."/>
            <person name="Eikmanns B.J."/>
            <person name="Gaigalat L."/>
            <person name="Goesmann A."/>
            <person name="Hartmann M."/>
            <person name="Huthmacher K."/>
            <person name="Kraemer R."/>
            <person name="Linke B."/>
            <person name="McHardy A.C."/>
            <person name="Meyer F."/>
            <person name="Moeckel B."/>
            <person name="Pfefferle W."/>
            <person name="Puehler A."/>
            <person name="Rey D.A."/>
            <person name="Rueckert C."/>
            <person name="Rupp O."/>
            <person name="Sahm H."/>
            <person name="Wendisch V.F."/>
            <person name="Wiegraebe I."/>
            <person name="Tauch A."/>
        </authorList>
    </citation>
    <scope>NUCLEOTIDE SEQUENCE [LARGE SCALE GENOMIC DNA]</scope>
    <source>
        <strain>ATCC 13032 / DSM 20300 / JCM 1318 / BCRC 11384 / CCUG 27702 / LMG 3730 / NBRC 12168 / NCIMB 10025 / NRRL B-2784 / 534</strain>
    </source>
</reference>